<feature type="chain" id="PRO_0000261017" description="Xanthine-guanine phosphoribosyltransferase">
    <location>
        <begin position="1"/>
        <end position="172"/>
    </location>
</feature>
<feature type="binding site" evidence="1">
    <location>
        <begin position="47"/>
        <end position="48"/>
    </location>
    <ligand>
        <name>5-phospho-alpha-D-ribose 1-diphosphate</name>
        <dbReference type="ChEBI" id="CHEBI:58017"/>
    </ligand>
</feature>
<feature type="binding site" evidence="1">
    <location>
        <begin position="106"/>
        <end position="114"/>
    </location>
    <ligand>
        <name>5-phospho-alpha-D-ribose 1-diphosphate</name>
        <dbReference type="ChEBI" id="CHEBI:58017"/>
    </ligand>
</feature>
<feature type="binding site" evidence="1">
    <location>
        <position position="107"/>
    </location>
    <ligand>
        <name>Mg(2+)</name>
        <dbReference type="ChEBI" id="CHEBI:18420"/>
    </ligand>
</feature>
<feature type="binding site" evidence="1">
    <location>
        <begin position="110"/>
        <end position="114"/>
    </location>
    <ligand>
        <name>GMP</name>
        <dbReference type="ChEBI" id="CHEBI:58115"/>
    </ligand>
</feature>
<feature type="binding site" evidence="1">
    <location>
        <position position="110"/>
    </location>
    <ligand>
        <name>guanine</name>
        <dbReference type="ChEBI" id="CHEBI:16235"/>
    </ligand>
</feature>
<feature type="binding site" evidence="1">
    <location>
        <position position="110"/>
    </location>
    <ligand>
        <name>xanthine</name>
        <dbReference type="ChEBI" id="CHEBI:17712"/>
    </ligand>
</feature>
<feature type="binding site" evidence="1">
    <location>
        <begin position="152"/>
        <end position="153"/>
    </location>
    <ligand>
        <name>GMP</name>
        <dbReference type="ChEBI" id="CHEBI:58115"/>
    </ligand>
</feature>
<feature type="binding site" evidence="1">
    <location>
        <position position="153"/>
    </location>
    <ligand>
        <name>guanine</name>
        <dbReference type="ChEBI" id="CHEBI:16235"/>
    </ligand>
</feature>
<feature type="binding site" evidence="1">
    <location>
        <position position="153"/>
    </location>
    <ligand>
        <name>xanthine</name>
        <dbReference type="ChEBI" id="CHEBI:17712"/>
    </ligand>
</feature>
<gene>
    <name evidence="1" type="primary">gpt</name>
    <name type="ordered locus">RPB_3213</name>
</gene>
<reference key="1">
    <citation type="submission" date="2006-01" db="EMBL/GenBank/DDBJ databases">
        <title>Complete sequence of Rhodopseudomonas palustris HaA2.</title>
        <authorList>
            <consortium name="US DOE Joint Genome Institute"/>
            <person name="Copeland A."/>
            <person name="Lucas S."/>
            <person name="Lapidus A."/>
            <person name="Barry K."/>
            <person name="Detter J.C."/>
            <person name="Glavina T."/>
            <person name="Hammon N."/>
            <person name="Israni S."/>
            <person name="Pitluck S."/>
            <person name="Chain P."/>
            <person name="Malfatti S."/>
            <person name="Shin M."/>
            <person name="Vergez L."/>
            <person name="Schmutz J."/>
            <person name="Larimer F."/>
            <person name="Land M."/>
            <person name="Hauser L."/>
            <person name="Pelletier D.A."/>
            <person name="Kyrpides N."/>
            <person name="Anderson I."/>
            <person name="Oda Y."/>
            <person name="Harwood C.S."/>
            <person name="Richardson P."/>
        </authorList>
    </citation>
    <scope>NUCLEOTIDE SEQUENCE [LARGE SCALE GENOMIC DNA]</scope>
    <source>
        <strain>HaA2</strain>
    </source>
</reference>
<organism>
    <name type="scientific">Rhodopseudomonas palustris (strain HaA2)</name>
    <dbReference type="NCBI Taxonomy" id="316058"/>
    <lineage>
        <taxon>Bacteria</taxon>
        <taxon>Pseudomonadati</taxon>
        <taxon>Pseudomonadota</taxon>
        <taxon>Alphaproteobacteria</taxon>
        <taxon>Hyphomicrobiales</taxon>
        <taxon>Nitrobacteraceae</taxon>
        <taxon>Rhodopseudomonas</taxon>
    </lineage>
</organism>
<evidence type="ECO:0000255" key="1">
    <source>
        <dbReference type="HAMAP-Rule" id="MF_01903"/>
    </source>
</evidence>
<keyword id="KW-0997">Cell inner membrane</keyword>
<keyword id="KW-1003">Cell membrane</keyword>
<keyword id="KW-0328">Glycosyltransferase</keyword>
<keyword id="KW-0460">Magnesium</keyword>
<keyword id="KW-0472">Membrane</keyword>
<keyword id="KW-0479">Metal-binding</keyword>
<keyword id="KW-0660">Purine salvage</keyword>
<keyword id="KW-1185">Reference proteome</keyword>
<keyword id="KW-0808">Transferase</keyword>
<dbReference type="EC" id="2.4.2.-" evidence="1"/>
<dbReference type="EC" id="2.4.2.22" evidence="1"/>
<dbReference type="EMBL" id="CP000250">
    <property type="protein sequence ID" value="ABD07909.1"/>
    <property type="molecule type" value="Genomic_DNA"/>
</dbReference>
<dbReference type="RefSeq" id="WP_011442093.1">
    <property type="nucleotide sequence ID" value="NC_007778.1"/>
</dbReference>
<dbReference type="SMR" id="Q2IV51"/>
<dbReference type="STRING" id="316058.RPB_3213"/>
<dbReference type="KEGG" id="rpb:RPB_3213"/>
<dbReference type="eggNOG" id="COG2236">
    <property type="taxonomic scope" value="Bacteria"/>
</dbReference>
<dbReference type="HOGENOM" id="CLU_080904_3_0_5"/>
<dbReference type="OrthoDB" id="9789690at2"/>
<dbReference type="UniPathway" id="UPA00602">
    <property type="reaction ID" value="UER00658"/>
</dbReference>
<dbReference type="UniPathway" id="UPA00909">
    <property type="reaction ID" value="UER00887"/>
</dbReference>
<dbReference type="Proteomes" id="UP000008809">
    <property type="component" value="Chromosome"/>
</dbReference>
<dbReference type="GO" id="GO:0005886">
    <property type="term" value="C:plasma membrane"/>
    <property type="evidence" value="ECO:0007669"/>
    <property type="project" value="UniProtKB-SubCell"/>
</dbReference>
<dbReference type="GO" id="GO:0052657">
    <property type="term" value="F:guanine phosphoribosyltransferase activity"/>
    <property type="evidence" value="ECO:0007669"/>
    <property type="project" value="RHEA"/>
</dbReference>
<dbReference type="GO" id="GO:0004422">
    <property type="term" value="F:hypoxanthine phosphoribosyltransferase activity"/>
    <property type="evidence" value="ECO:0007669"/>
    <property type="project" value="RHEA"/>
</dbReference>
<dbReference type="GO" id="GO:0000287">
    <property type="term" value="F:magnesium ion binding"/>
    <property type="evidence" value="ECO:0007669"/>
    <property type="project" value="UniProtKB-UniRule"/>
</dbReference>
<dbReference type="GO" id="GO:0000310">
    <property type="term" value="F:xanthine phosphoribosyltransferase activity"/>
    <property type="evidence" value="ECO:0007669"/>
    <property type="project" value="UniProtKB-UniRule"/>
</dbReference>
<dbReference type="GO" id="GO:0032263">
    <property type="term" value="P:GMP salvage"/>
    <property type="evidence" value="ECO:0007669"/>
    <property type="project" value="UniProtKB-UniRule"/>
</dbReference>
<dbReference type="GO" id="GO:0006166">
    <property type="term" value="P:purine ribonucleoside salvage"/>
    <property type="evidence" value="ECO:0007669"/>
    <property type="project" value="UniProtKB-KW"/>
</dbReference>
<dbReference type="GO" id="GO:0032265">
    <property type="term" value="P:XMP salvage"/>
    <property type="evidence" value="ECO:0007669"/>
    <property type="project" value="UniProtKB-UniRule"/>
</dbReference>
<dbReference type="CDD" id="cd06223">
    <property type="entry name" value="PRTases_typeI"/>
    <property type="match status" value="1"/>
</dbReference>
<dbReference type="Gene3D" id="3.40.50.2020">
    <property type="match status" value="1"/>
</dbReference>
<dbReference type="HAMAP" id="MF_01903">
    <property type="entry name" value="XGPRT"/>
    <property type="match status" value="1"/>
</dbReference>
<dbReference type="InterPro" id="IPR000836">
    <property type="entry name" value="PRibTrfase_dom"/>
</dbReference>
<dbReference type="InterPro" id="IPR029057">
    <property type="entry name" value="PRTase-like"/>
</dbReference>
<dbReference type="InterPro" id="IPR023747">
    <property type="entry name" value="Xanthine_Guanine_PRibTrfase"/>
</dbReference>
<dbReference type="NCBIfam" id="NF006613">
    <property type="entry name" value="PRK09177.1"/>
    <property type="match status" value="1"/>
</dbReference>
<dbReference type="PANTHER" id="PTHR39563">
    <property type="entry name" value="XANTHINE PHOSPHORIBOSYLTRANSFERASE"/>
    <property type="match status" value="1"/>
</dbReference>
<dbReference type="PANTHER" id="PTHR39563:SF1">
    <property type="entry name" value="XANTHINE-GUANINE PHOSPHORIBOSYLTRANSFERASE"/>
    <property type="match status" value="1"/>
</dbReference>
<dbReference type="Pfam" id="PF00156">
    <property type="entry name" value="Pribosyltran"/>
    <property type="match status" value="1"/>
</dbReference>
<dbReference type="SUPFAM" id="SSF53271">
    <property type="entry name" value="PRTase-like"/>
    <property type="match status" value="1"/>
</dbReference>
<dbReference type="PROSITE" id="PS00103">
    <property type="entry name" value="PUR_PYR_PR_TRANSFER"/>
    <property type="match status" value="1"/>
</dbReference>
<comment type="function">
    <text evidence="1">Purine salvage pathway enzyme that catalyzes the transfer of the ribosyl-5-phosphate group from 5-phospho-alpha-D-ribose 1-diphosphate (PRPP) to the N9 position of the 6-oxopurines guanine and xanthine to form the corresponding ribonucleotides GMP (guanosine 5'-monophosphate) and XMP (xanthosine 5'-monophosphate), with the release of PPi. To a lesser extent, also acts on hypoxanthine.</text>
</comment>
<comment type="catalytic activity">
    <reaction evidence="1">
        <text>GMP + diphosphate = guanine + 5-phospho-alpha-D-ribose 1-diphosphate</text>
        <dbReference type="Rhea" id="RHEA:25424"/>
        <dbReference type="ChEBI" id="CHEBI:16235"/>
        <dbReference type="ChEBI" id="CHEBI:33019"/>
        <dbReference type="ChEBI" id="CHEBI:58017"/>
        <dbReference type="ChEBI" id="CHEBI:58115"/>
    </reaction>
    <physiologicalReaction direction="right-to-left" evidence="1">
        <dbReference type="Rhea" id="RHEA:25426"/>
    </physiologicalReaction>
</comment>
<comment type="catalytic activity">
    <reaction evidence="1">
        <text>XMP + diphosphate = xanthine + 5-phospho-alpha-D-ribose 1-diphosphate</text>
        <dbReference type="Rhea" id="RHEA:10800"/>
        <dbReference type="ChEBI" id="CHEBI:17712"/>
        <dbReference type="ChEBI" id="CHEBI:33019"/>
        <dbReference type="ChEBI" id="CHEBI:57464"/>
        <dbReference type="ChEBI" id="CHEBI:58017"/>
        <dbReference type="EC" id="2.4.2.22"/>
    </reaction>
    <physiologicalReaction direction="right-to-left" evidence="1">
        <dbReference type="Rhea" id="RHEA:10802"/>
    </physiologicalReaction>
</comment>
<comment type="catalytic activity">
    <reaction evidence="1">
        <text>IMP + diphosphate = hypoxanthine + 5-phospho-alpha-D-ribose 1-diphosphate</text>
        <dbReference type="Rhea" id="RHEA:17973"/>
        <dbReference type="ChEBI" id="CHEBI:17368"/>
        <dbReference type="ChEBI" id="CHEBI:33019"/>
        <dbReference type="ChEBI" id="CHEBI:58017"/>
        <dbReference type="ChEBI" id="CHEBI:58053"/>
    </reaction>
    <physiologicalReaction direction="right-to-left" evidence="1">
        <dbReference type="Rhea" id="RHEA:17975"/>
    </physiologicalReaction>
</comment>
<comment type="cofactor">
    <cofactor evidence="1">
        <name>Mg(2+)</name>
        <dbReference type="ChEBI" id="CHEBI:18420"/>
    </cofactor>
</comment>
<comment type="pathway">
    <text evidence="1">Purine metabolism; GMP biosynthesis via salvage pathway; GMP from guanine: step 1/1.</text>
</comment>
<comment type="pathway">
    <text evidence="1">Purine metabolism; XMP biosynthesis via salvage pathway; XMP from xanthine: step 1/1.</text>
</comment>
<comment type="subunit">
    <text evidence="1">Homotetramer.</text>
</comment>
<comment type="subcellular location">
    <subcellularLocation>
        <location evidence="1">Cell inner membrane</location>
        <topology evidence="1">Peripheral membrane protein</topology>
    </subcellularLocation>
</comment>
<comment type="similarity">
    <text evidence="1">Belongs to the purine/pyrimidine phosphoribosyltransferase family. XGPT subfamily.</text>
</comment>
<name>XGPT_RHOP2</name>
<proteinExistence type="inferred from homology"/>
<protein>
    <recommendedName>
        <fullName evidence="1">Xanthine-guanine phosphoribosyltransferase</fullName>
        <shortName evidence="1">XGPRT</shortName>
        <ecNumber evidence="1">2.4.2.-</ecNumber>
        <ecNumber evidence="1">2.4.2.22</ecNumber>
    </recommendedName>
    <alternativeName>
        <fullName evidence="1">Xanthine phosphoribosyltransferase</fullName>
    </alternativeName>
</protein>
<sequence length="172" mass="18631">MGSDADADLGERRPFPVSWDQFHRDCRALTWRLNEVGPFAAVIAITRGGLVPAAIVARELGLRVIDTICVASYAHDKQGDLQVLKGVSEQTAALGHGTGKGLLIVDDLVDTGKTGRMVRDLLPDAHFATVYAKPMGKPLVDTFITEVSQDTWIFFPWDTGLSFQPPLKDGAA</sequence>
<accession>Q2IV51</accession>